<keyword id="KW-0030">Aminoacyl-tRNA synthetase</keyword>
<keyword id="KW-0067">ATP-binding</keyword>
<keyword id="KW-0963">Cytoplasm</keyword>
<keyword id="KW-0436">Ligase</keyword>
<keyword id="KW-0479">Metal-binding</keyword>
<keyword id="KW-0547">Nucleotide-binding</keyword>
<keyword id="KW-0648">Protein biosynthesis</keyword>
<keyword id="KW-1185">Reference proteome</keyword>
<keyword id="KW-0694">RNA-binding</keyword>
<keyword id="KW-0820">tRNA-binding</keyword>
<keyword id="KW-0862">Zinc</keyword>
<reference key="1">
    <citation type="journal article" date="2006" name="Proc. Natl. Acad. Sci. U.S.A.">
        <title>Genomic analysis of the uncultivated marine crenarchaeote Cenarchaeum symbiosum.</title>
        <authorList>
            <person name="Hallam S.J."/>
            <person name="Konstantinidis K.T."/>
            <person name="Putnam N."/>
            <person name="Schleper C."/>
            <person name="Watanabe Y."/>
            <person name="Sugahara J."/>
            <person name="Preston C."/>
            <person name="de la Torre J."/>
            <person name="Richardson P.M."/>
            <person name="DeLong E.F."/>
        </authorList>
    </citation>
    <scope>NUCLEOTIDE SEQUENCE [LARGE SCALE GENOMIC DNA]</scope>
    <source>
        <strain>A</strain>
    </source>
</reference>
<proteinExistence type="inferred from homology"/>
<evidence type="ECO:0000250" key="1">
    <source>
        <dbReference type="UniProtKB" id="Q9UZ14"/>
    </source>
</evidence>
<evidence type="ECO:0000305" key="2"/>
<feature type="chain" id="PRO_1000020364" description="Threonine--tRNA ligase">
    <location>
        <begin position="1"/>
        <end position="615"/>
    </location>
</feature>
<feature type="region of interest" description="Editing domain" evidence="1">
    <location>
        <begin position="1"/>
        <end position="132"/>
    </location>
</feature>
<feature type="region of interest" description="Catalytic" evidence="1">
    <location>
        <begin position="196"/>
        <end position="495"/>
    </location>
</feature>
<feature type="binding site" evidence="1">
    <location>
        <position position="288"/>
    </location>
    <ligand>
        <name>Zn(2+)</name>
        <dbReference type="ChEBI" id="CHEBI:29105"/>
    </ligand>
</feature>
<feature type="binding site" evidence="1">
    <location>
        <position position="340"/>
    </location>
    <ligand>
        <name>Zn(2+)</name>
        <dbReference type="ChEBI" id="CHEBI:29105"/>
    </ligand>
</feature>
<feature type="binding site" evidence="1">
    <location>
        <position position="464"/>
    </location>
    <ligand>
        <name>Zn(2+)</name>
        <dbReference type="ChEBI" id="CHEBI:29105"/>
    </ligand>
</feature>
<comment type="function">
    <text evidence="1">Catalyzes the attachment of threonine to tRNA(Thr) in a two-step reaction: L-threonine is first activated by ATP to form Thr-AMP and then transferred to the acceptor end of tRNA(Thr). Also edits incorrectly charged L-seryl-tRNA(Thr).</text>
</comment>
<comment type="catalytic activity">
    <reaction evidence="1">
        <text>tRNA(Thr) + L-threonine + ATP = L-threonyl-tRNA(Thr) + AMP + diphosphate + H(+)</text>
        <dbReference type="Rhea" id="RHEA:24624"/>
        <dbReference type="Rhea" id="RHEA-COMP:9670"/>
        <dbReference type="Rhea" id="RHEA-COMP:9704"/>
        <dbReference type="ChEBI" id="CHEBI:15378"/>
        <dbReference type="ChEBI" id="CHEBI:30616"/>
        <dbReference type="ChEBI" id="CHEBI:33019"/>
        <dbReference type="ChEBI" id="CHEBI:57926"/>
        <dbReference type="ChEBI" id="CHEBI:78442"/>
        <dbReference type="ChEBI" id="CHEBI:78534"/>
        <dbReference type="ChEBI" id="CHEBI:456215"/>
        <dbReference type="EC" id="6.1.1.3"/>
    </reaction>
</comment>
<comment type="cofactor">
    <cofactor evidence="1">
        <name>Zn(2+)</name>
        <dbReference type="ChEBI" id="CHEBI:29105"/>
    </cofactor>
    <text evidence="1">Binds 1 zinc ion per subunit.</text>
</comment>
<comment type="subunit">
    <text evidence="1">Homodimer.</text>
</comment>
<comment type="subcellular location">
    <subcellularLocation>
        <location evidence="1">Cytoplasm</location>
    </subcellularLocation>
</comment>
<comment type="domain">
    <text evidence="1">The N-terminal domain is an archaea-specific tRNA-editing domain that hydrolyzes incorrectly charged L-seryl-tRNA(Thr). Catalysis of tRNA editing is performed by the charged tRNA itself.</text>
</comment>
<comment type="similarity">
    <text evidence="2">Belongs to the class-II aminoacyl-tRNA synthetase family.</text>
</comment>
<dbReference type="EC" id="6.1.1.3"/>
<dbReference type="EMBL" id="DP000238">
    <property type="protein sequence ID" value="ABK76893.1"/>
    <property type="molecule type" value="Genomic_DNA"/>
</dbReference>
<dbReference type="SMR" id="A0RU76"/>
<dbReference type="STRING" id="414004.CENSYa_0251"/>
<dbReference type="EnsemblBacteria" id="ABK76893">
    <property type="protein sequence ID" value="ABK76893"/>
    <property type="gene ID" value="CENSYa_0251"/>
</dbReference>
<dbReference type="KEGG" id="csy:CENSYa_0251"/>
<dbReference type="PATRIC" id="fig|414004.10.peg.218"/>
<dbReference type="HOGENOM" id="CLU_029833_0_0_2"/>
<dbReference type="Proteomes" id="UP000000758">
    <property type="component" value="Chromosome"/>
</dbReference>
<dbReference type="GO" id="GO:0005737">
    <property type="term" value="C:cytoplasm"/>
    <property type="evidence" value="ECO:0007669"/>
    <property type="project" value="UniProtKB-SubCell"/>
</dbReference>
<dbReference type="GO" id="GO:0005524">
    <property type="term" value="F:ATP binding"/>
    <property type="evidence" value="ECO:0007669"/>
    <property type="project" value="UniProtKB-UniRule"/>
</dbReference>
<dbReference type="GO" id="GO:0004829">
    <property type="term" value="F:threonine-tRNA ligase activity"/>
    <property type="evidence" value="ECO:0007669"/>
    <property type="project" value="UniProtKB-UniRule"/>
</dbReference>
<dbReference type="GO" id="GO:0000049">
    <property type="term" value="F:tRNA binding"/>
    <property type="evidence" value="ECO:0007669"/>
    <property type="project" value="UniProtKB-KW"/>
</dbReference>
<dbReference type="GO" id="GO:0008270">
    <property type="term" value="F:zinc ion binding"/>
    <property type="evidence" value="ECO:0007669"/>
    <property type="project" value="InterPro"/>
</dbReference>
<dbReference type="GO" id="GO:0006435">
    <property type="term" value="P:threonyl-tRNA aminoacylation"/>
    <property type="evidence" value="ECO:0007669"/>
    <property type="project" value="UniProtKB-UniRule"/>
</dbReference>
<dbReference type="CDD" id="cd00860">
    <property type="entry name" value="ThrRS_anticodon"/>
    <property type="match status" value="1"/>
</dbReference>
<dbReference type="FunFam" id="3.30.930.10:FF:000076">
    <property type="entry name" value="Threonine--tRNA ligase"/>
    <property type="match status" value="1"/>
</dbReference>
<dbReference type="FunFam" id="3.40.50.800:FF:000001">
    <property type="entry name" value="Threonine--tRNA ligase"/>
    <property type="match status" value="1"/>
</dbReference>
<dbReference type="Gene3D" id="3.40.50.800">
    <property type="entry name" value="Anticodon-binding domain"/>
    <property type="match status" value="1"/>
</dbReference>
<dbReference type="Gene3D" id="3.30.930.10">
    <property type="entry name" value="Bira Bifunctional Protein, Domain 2"/>
    <property type="match status" value="1"/>
</dbReference>
<dbReference type="Gene3D" id="3.50.80.10">
    <property type="entry name" value="D-tyrosyl-tRNA(Tyr) deacylase"/>
    <property type="match status" value="1"/>
</dbReference>
<dbReference type="InterPro" id="IPR002314">
    <property type="entry name" value="aa-tRNA-synt_IIb"/>
</dbReference>
<dbReference type="InterPro" id="IPR006195">
    <property type="entry name" value="aa-tRNA-synth_II"/>
</dbReference>
<dbReference type="InterPro" id="IPR045864">
    <property type="entry name" value="aa-tRNA-synth_II/BPL/LPL"/>
</dbReference>
<dbReference type="InterPro" id="IPR004154">
    <property type="entry name" value="Anticodon-bd"/>
</dbReference>
<dbReference type="InterPro" id="IPR036621">
    <property type="entry name" value="Anticodon-bd_dom_sf"/>
</dbReference>
<dbReference type="InterPro" id="IPR023509">
    <property type="entry name" value="DTD-like_sf"/>
</dbReference>
<dbReference type="InterPro" id="IPR002320">
    <property type="entry name" value="Thr-tRNA-ligase_IIa"/>
</dbReference>
<dbReference type="InterPro" id="IPR015011">
    <property type="entry name" value="Threonyl-tRNA_syn_edit_dom_arc"/>
</dbReference>
<dbReference type="InterPro" id="IPR047246">
    <property type="entry name" value="ThrRS_anticodon"/>
</dbReference>
<dbReference type="NCBIfam" id="NF003068">
    <property type="entry name" value="PRK03991.1"/>
    <property type="match status" value="1"/>
</dbReference>
<dbReference type="NCBIfam" id="TIGR00418">
    <property type="entry name" value="thrS"/>
    <property type="match status" value="1"/>
</dbReference>
<dbReference type="PANTHER" id="PTHR11451:SF44">
    <property type="entry name" value="THREONINE--TRNA LIGASE, CHLOROPLASTIC_MITOCHONDRIAL 2"/>
    <property type="match status" value="1"/>
</dbReference>
<dbReference type="PANTHER" id="PTHR11451">
    <property type="entry name" value="THREONINE-TRNA LIGASE"/>
    <property type="match status" value="1"/>
</dbReference>
<dbReference type="Pfam" id="PF03129">
    <property type="entry name" value="HGTP_anticodon"/>
    <property type="match status" value="1"/>
</dbReference>
<dbReference type="Pfam" id="PF00587">
    <property type="entry name" value="tRNA-synt_2b"/>
    <property type="match status" value="1"/>
</dbReference>
<dbReference type="Pfam" id="PF08915">
    <property type="entry name" value="tRNA-Thr_ED"/>
    <property type="match status" value="1"/>
</dbReference>
<dbReference type="PRINTS" id="PR01047">
    <property type="entry name" value="TRNASYNTHTHR"/>
</dbReference>
<dbReference type="SUPFAM" id="SSF52954">
    <property type="entry name" value="Class II aaRS ABD-related"/>
    <property type="match status" value="1"/>
</dbReference>
<dbReference type="SUPFAM" id="SSF55681">
    <property type="entry name" value="Class II aaRS and biotin synthetases"/>
    <property type="match status" value="1"/>
</dbReference>
<dbReference type="PROSITE" id="PS50862">
    <property type="entry name" value="AA_TRNA_LIGASE_II"/>
    <property type="match status" value="1"/>
</dbReference>
<organism>
    <name type="scientific">Cenarchaeum symbiosum (strain A)</name>
    <dbReference type="NCBI Taxonomy" id="414004"/>
    <lineage>
        <taxon>Archaea</taxon>
        <taxon>Nitrososphaerota</taxon>
        <taxon>Candidatus Cenarchaeales</taxon>
        <taxon>Candidatus Cenarchaeaceae</taxon>
        <taxon>Candidatus Cenarchaeum</taxon>
    </lineage>
</organism>
<gene>
    <name type="primary">thrS</name>
    <name type="ordered locus">CENSYa_0251</name>
</gene>
<sequence length="615" mass="68543">MRILQLHCDRIEYSPVKKEIAAAEEPATGGKLEDAVLAFVAVEKGDGPGEAARAAAELRQALGRIGCKKLLIYPYAHLSSTLAAPSIALGLISEMEAALHDLEVSRAPFGWTKSYTISVKGHPLAEGFKVITGDARGTGAPKALESESSMKSTWHVLTPDGNMTDASEFDFAGCPKLKALARYEASKKRGTDEPPPHVALMKRMGIADYEPASDAGNMKFFPNGRLIKSLIERYVTERVVEYGGYEVETPIMYDSNHPSMVSYFNRFPARQYSIDSEGKSLFLRFAACFGQFLMAGDYQLSYKNLPFRLYELTRYSFRREQSGELVGLRRLRAFTMPDCHAFCTDMAQAVREAGVRFELSRDVIGQLGLDAADYEMAIRLTEEFYAENGGAVREMVRRHGRPVLVEMWKERFFYFVLKWEFNYIDGAGKASALSTDQIDVENGKRYGIEFVDENNGRQHPVILHNSPSGAIERVIYTLLEKAAADSARGTKPELPLWLSPVQARIIPVGEELVRNATELAKEMAGHGIRADVDDRNESMGKRIREAEKEWVRYILVVGEKEAASGRLSVRDRRTGKSTEMGLDDLVEAVREQTAGKPSAGLNSPFYLSKRPQVML</sequence>
<accession>A0RU76</accession>
<protein>
    <recommendedName>
        <fullName>Threonine--tRNA ligase</fullName>
        <ecNumber>6.1.1.3</ecNumber>
    </recommendedName>
    <alternativeName>
        <fullName>Threonyl-tRNA synthetase</fullName>
        <shortName>ThrRS</shortName>
    </alternativeName>
</protein>
<name>SYT_CENSY</name>